<evidence type="ECO:0000250" key="1">
    <source>
        <dbReference type="UniProtKB" id="Q09028"/>
    </source>
</evidence>
<evidence type="ECO:0000269" key="2">
    <source>
    </source>
</evidence>
<evidence type="ECO:0000269" key="3">
    <source>
    </source>
</evidence>
<evidence type="ECO:0000269" key="4">
    <source>
    </source>
</evidence>
<evidence type="ECO:0000269" key="5">
    <source>
    </source>
</evidence>
<evidence type="ECO:0000269" key="6">
    <source>
    </source>
</evidence>
<evidence type="ECO:0000269" key="7">
    <source>
    </source>
</evidence>
<evidence type="ECO:0000269" key="8">
    <source>
    </source>
</evidence>
<evidence type="ECO:0000305" key="9"/>
<evidence type="ECO:0000305" key="10">
    <source>
    </source>
</evidence>
<evidence type="ECO:0007744" key="11">
    <source>
    </source>
</evidence>
<evidence type="ECO:0007744" key="12">
    <source>
    </source>
</evidence>
<dbReference type="EMBL" id="U35141">
    <property type="protein sequence ID" value="AAC52275.1"/>
    <property type="status" value="ALT_FRAME"/>
    <property type="molecule type" value="mRNA"/>
</dbReference>
<dbReference type="EMBL" id="AL607123">
    <property type="status" value="NOT_ANNOTATED_CDS"/>
    <property type="molecule type" value="Genomic_DNA"/>
</dbReference>
<dbReference type="EMBL" id="CU234133">
    <property type="status" value="NOT_ANNOTATED_CDS"/>
    <property type="molecule type" value="Genomic_DNA"/>
</dbReference>
<dbReference type="EMBL" id="CH466552">
    <property type="protein sequence ID" value="EDL30202.1"/>
    <property type="molecule type" value="Genomic_DNA"/>
</dbReference>
<dbReference type="EMBL" id="BC138568">
    <property type="protein sequence ID" value="AAI38569.1"/>
    <property type="molecule type" value="mRNA"/>
</dbReference>
<dbReference type="EMBL" id="BC138570">
    <property type="protein sequence ID" value="AAI38571.1"/>
    <property type="molecule type" value="mRNA"/>
</dbReference>
<dbReference type="CCDS" id="CCDS18688.1"/>
<dbReference type="PIR" id="I49366">
    <property type="entry name" value="I49366"/>
</dbReference>
<dbReference type="RefSeq" id="NP_033056.2">
    <property type="nucleotide sequence ID" value="NM_009030.3"/>
</dbReference>
<dbReference type="SMR" id="Q60972"/>
<dbReference type="BioGRID" id="202816">
    <property type="interactions" value="46"/>
</dbReference>
<dbReference type="ComplexPortal" id="CPX-3441">
    <property type="entry name" value="SIN3A histone deacetylase complex, ES cell-specific variant"/>
</dbReference>
<dbReference type="ComplexPortal" id="CPX-3443">
    <property type="entry name" value="SIN3A histone deacetylase complex"/>
</dbReference>
<dbReference type="ComplexPortal" id="CPX-3444">
    <property type="entry name" value="SIN3B histone deacetylase complex"/>
</dbReference>
<dbReference type="ComplexPortal" id="CPX-570">
    <property type="entry name" value="Chromatin assembly factor 1 complex"/>
</dbReference>
<dbReference type="ComplexPortal" id="CPX-694">
    <property type="entry name" value="NuRF chromatin remodeling complex"/>
</dbReference>
<dbReference type="ComplexPortal" id="CPX-953">
    <property type="entry name" value="MBD2/NuRD nucleosome remodeling and deacetylase complex"/>
</dbReference>
<dbReference type="ComplexPortal" id="CPX-954">
    <property type="entry name" value="MBD3/NuRD nucleosome remodeling and deacetylase complex"/>
</dbReference>
<dbReference type="CORUM" id="Q60972"/>
<dbReference type="DIP" id="DIP-32855N"/>
<dbReference type="FunCoup" id="Q60972">
    <property type="interactions" value="4425"/>
</dbReference>
<dbReference type="IntAct" id="Q60972">
    <property type="interactions" value="19"/>
</dbReference>
<dbReference type="MINT" id="Q60972"/>
<dbReference type="STRING" id="10090.ENSMUSP00000099658"/>
<dbReference type="GlyGen" id="Q60972">
    <property type="glycosylation" value="2 sites, 1 N-linked glycan (1 site), 1 O-linked glycan (1 site)"/>
</dbReference>
<dbReference type="iPTMnet" id="Q60972"/>
<dbReference type="PhosphoSitePlus" id="Q60972"/>
<dbReference type="SwissPalm" id="Q60972"/>
<dbReference type="REPRODUCTION-2DPAGE" id="Q60972"/>
<dbReference type="jPOST" id="Q60972"/>
<dbReference type="PaxDb" id="10090-ENSMUSP00000099658"/>
<dbReference type="PeptideAtlas" id="Q60972"/>
<dbReference type="ProteomicsDB" id="253176"/>
<dbReference type="Pumba" id="Q60972"/>
<dbReference type="Antibodypedia" id="3343">
    <property type="antibodies" value="489 antibodies from 38 providers"/>
</dbReference>
<dbReference type="DNASU" id="19646"/>
<dbReference type="Ensembl" id="ENSMUST00000102598.4">
    <property type="protein sequence ID" value="ENSMUSP00000099658.4"/>
    <property type="gene ID" value="ENSMUSG00000057236.11"/>
</dbReference>
<dbReference type="GeneID" id="19646"/>
<dbReference type="KEGG" id="mmu:19646"/>
<dbReference type="UCSC" id="uc008uwt.1">
    <property type="organism name" value="mouse"/>
</dbReference>
<dbReference type="AGR" id="MGI:1194912"/>
<dbReference type="CTD" id="5928"/>
<dbReference type="MGI" id="MGI:1194912">
    <property type="gene designation" value="Rbbp4"/>
</dbReference>
<dbReference type="VEuPathDB" id="HostDB:ENSMUSG00000057236"/>
<dbReference type="eggNOG" id="KOG0264">
    <property type="taxonomic scope" value="Eukaryota"/>
</dbReference>
<dbReference type="GeneTree" id="ENSGT00940000153375"/>
<dbReference type="HOGENOM" id="CLU_020445_3_1_1"/>
<dbReference type="InParanoid" id="Q60972"/>
<dbReference type="OMA" id="PHEEGCL"/>
<dbReference type="OrthoDB" id="427795at2759"/>
<dbReference type="PhylomeDB" id="Q60972"/>
<dbReference type="TreeFam" id="TF106485"/>
<dbReference type="Reactome" id="R-MMU-1538133">
    <property type="pathway name" value="G0 and Early G1"/>
</dbReference>
<dbReference type="Reactome" id="R-MMU-212300">
    <property type="pathway name" value="PRC2 methylates histones and DNA"/>
</dbReference>
<dbReference type="Reactome" id="R-MMU-2559580">
    <property type="pathway name" value="Oxidative Stress Induced Senescence"/>
</dbReference>
<dbReference type="Reactome" id="R-MMU-3214815">
    <property type="pathway name" value="HDACs deacetylate histones"/>
</dbReference>
<dbReference type="Reactome" id="R-MMU-3214841">
    <property type="pathway name" value="PKMTs methylate histone lysines"/>
</dbReference>
<dbReference type="Reactome" id="R-MMU-606279">
    <property type="pathway name" value="Deposition of new CENPA-containing nucleosomes at the centromere"/>
</dbReference>
<dbReference type="Reactome" id="R-MMU-6804758">
    <property type="pathway name" value="Regulation of TP53 Activity through Acetylation"/>
</dbReference>
<dbReference type="Reactome" id="R-MMU-73762">
    <property type="pathway name" value="RNA Polymerase I Transcription Initiation"/>
</dbReference>
<dbReference type="Reactome" id="R-MMU-8943724">
    <property type="pathway name" value="Regulation of PTEN gene transcription"/>
</dbReference>
<dbReference type="Reactome" id="R-MMU-8953750">
    <property type="pathway name" value="Transcriptional Regulation by E2F6"/>
</dbReference>
<dbReference type="BioGRID-ORCS" id="19646">
    <property type="hits" value="36 hits in 87 CRISPR screens"/>
</dbReference>
<dbReference type="ChiTaRS" id="Rbbp4">
    <property type="organism name" value="mouse"/>
</dbReference>
<dbReference type="PRO" id="PR:Q60972"/>
<dbReference type="Proteomes" id="UP000000589">
    <property type="component" value="Chromosome 4"/>
</dbReference>
<dbReference type="RNAct" id="Q60972">
    <property type="molecule type" value="protein"/>
</dbReference>
<dbReference type="Bgee" id="ENSMUSG00000057236">
    <property type="expression patterns" value="Expressed in ureteric bud tip and 263 other cell types or tissues"/>
</dbReference>
<dbReference type="ExpressionAtlas" id="Q60972">
    <property type="expression patterns" value="baseline and differential"/>
</dbReference>
<dbReference type="GO" id="GO:1904949">
    <property type="term" value="C:ATPase complex"/>
    <property type="evidence" value="ECO:0000266"/>
    <property type="project" value="ComplexPortal"/>
</dbReference>
<dbReference type="GO" id="GO:0033186">
    <property type="term" value="C:CAF-1 complex"/>
    <property type="evidence" value="ECO:0000250"/>
    <property type="project" value="UniProtKB"/>
</dbReference>
<dbReference type="GO" id="GO:0000785">
    <property type="term" value="C:chromatin"/>
    <property type="evidence" value="ECO:0000266"/>
    <property type="project" value="ComplexPortal"/>
</dbReference>
<dbReference type="GO" id="GO:0000781">
    <property type="term" value="C:chromosome, telomeric region"/>
    <property type="evidence" value="ECO:0007669"/>
    <property type="project" value="UniProtKB-SubCell"/>
</dbReference>
<dbReference type="GO" id="GO:0005829">
    <property type="term" value="C:cytosol"/>
    <property type="evidence" value="ECO:0007669"/>
    <property type="project" value="Ensembl"/>
</dbReference>
<dbReference type="GO" id="GO:0035098">
    <property type="term" value="C:ESC/E(Z) complex"/>
    <property type="evidence" value="ECO:0000314"/>
    <property type="project" value="UniProtKB"/>
</dbReference>
<dbReference type="GO" id="GO:0005654">
    <property type="term" value="C:nucleoplasm"/>
    <property type="evidence" value="ECO:0000304"/>
    <property type="project" value="Reactome"/>
</dbReference>
<dbReference type="GO" id="GO:0005634">
    <property type="term" value="C:nucleus"/>
    <property type="evidence" value="ECO:0000314"/>
    <property type="project" value="UniProtKB"/>
</dbReference>
<dbReference type="GO" id="GO:0016581">
    <property type="term" value="C:NuRD complex"/>
    <property type="evidence" value="ECO:0000314"/>
    <property type="project" value="MGI"/>
</dbReference>
<dbReference type="GO" id="GO:0016589">
    <property type="term" value="C:NURF complex"/>
    <property type="evidence" value="ECO:0000266"/>
    <property type="project" value="ComplexPortal"/>
</dbReference>
<dbReference type="GO" id="GO:0070822">
    <property type="term" value="C:Sin3-type complex"/>
    <property type="evidence" value="ECO:0000303"/>
    <property type="project" value="ComplexPortal"/>
</dbReference>
<dbReference type="GO" id="GO:0008094">
    <property type="term" value="F:ATP-dependent activity, acting on DNA"/>
    <property type="evidence" value="ECO:0007669"/>
    <property type="project" value="Ensembl"/>
</dbReference>
<dbReference type="GO" id="GO:0042393">
    <property type="term" value="F:histone binding"/>
    <property type="evidence" value="ECO:0007669"/>
    <property type="project" value="Ensembl"/>
</dbReference>
<dbReference type="GO" id="GO:0042826">
    <property type="term" value="F:histone deacetylase binding"/>
    <property type="evidence" value="ECO:0007669"/>
    <property type="project" value="Ensembl"/>
</dbReference>
<dbReference type="GO" id="GO:0000978">
    <property type="term" value="F:RNA polymerase II cis-regulatory region sequence-specific DNA binding"/>
    <property type="evidence" value="ECO:0000314"/>
    <property type="project" value="UniProtKB"/>
</dbReference>
<dbReference type="GO" id="GO:0007420">
    <property type="term" value="P:brain development"/>
    <property type="evidence" value="ECO:0000303"/>
    <property type="project" value="ComplexPortal"/>
</dbReference>
<dbReference type="GO" id="GO:0006338">
    <property type="term" value="P:chromatin remodeling"/>
    <property type="evidence" value="ECO:0000250"/>
    <property type="project" value="HGNC-UCL"/>
</dbReference>
<dbReference type="GO" id="GO:0006281">
    <property type="term" value="P:DNA repair"/>
    <property type="evidence" value="ECO:0007669"/>
    <property type="project" value="UniProtKB-KW"/>
</dbReference>
<dbReference type="GO" id="GO:0006260">
    <property type="term" value="P:DNA replication"/>
    <property type="evidence" value="ECO:0007669"/>
    <property type="project" value="UniProtKB-KW"/>
</dbReference>
<dbReference type="GO" id="GO:0006335">
    <property type="term" value="P:DNA replication-dependent chromatin assembly"/>
    <property type="evidence" value="ECO:0000250"/>
    <property type="project" value="UniProtKB"/>
</dbReference>
<dbReference type="GO" id="GO:0030336">
    <property type="term" value="P:negative regulation of cell migration"/>
    <property type="evidence" value="ECO:0000303"/>
    <property type="project" value="ComplexPortal"/>
</dbReference>
<dbReference type="GO" id="GO:0045892">
    <property type="term" value="P:negative regulation of DNA-templated transcription"/>
    <property type="evidence" value="ECO:0000303"/>
    <property type="project" value="ComplexPortal"/>
</dbReference>
<dbReference type="GO" id="GO:1902455">
    <property type="term" value="P:negative regulation of stem cell population maintenance"/>
    <property type="evidence" value="ECO:0000303"/>
    <property type="project" value="ComplexPortal"/>
</dbReference>
<dbReference type="GO" id="GO:0000122">
    <property type="term" value="P:negative regulation of transcription by RNA polymerase II"/>
    <property type="evidence" value="ECO:0000303"/>
    <property type="project" value="ComplexPortal"/>
</dbReference>
<dbReference type="GO" id="GO:0030512">
    <property type="term" value="P:negative regulation of transforming growth factor beta receptor signaling pathway"/>
    <property type="evidence" value="ECO:0000303"/>
    <property type="project" value="ComplexPortal"/>
</dbReference>
<dbReference type="GO" id="GO:0006334">
    <property type="term" value="P:nucleosome assembly"/>
    <property type="evidence" value="ECO:0007669"/>
    <property type="project" value="Ensembl"/>
</dbReference>
<dbReference type="GO" id="GO:0045893">
    <property type="term" value="P:positive regulation of DNA-templated transcription"/>
    <property type="evidence" value="ECO:0000303"/>
    <property type="project" value="ComplexPortal"/>
</dbReference>
<dbReference type="GO" id="GO:1902459">
    <property type="term" value="P:positive regulation of stem cell population maintenance"/>
    <property type="evidence" value="ECO:0000303"/>
    <property type="project" value="ComplexPortal"/>
</dbReference>
<dbReference type="GO" id="GO:0042659">
    <property type="term" value="P:regulation of cell fate specification"/>
    <property type="evidence" value="ECO:0000303"/>
    <property type="project" value="ComplexPortal"/>
</dbReference>
<dbReference type="GO" id="GO:0006355">
    <property type="term" value="P:regulation of DNA-templated transcription"/>
    <property type="evidence" value="ECO:0000266"/>
    <property type="project" value="ComplexPortal"/>
</dbReference>
<dbReference type="GO" id="GO:2000736">
    <property type="term" value="P:regulation of stem cell differentiation"/>
    <property type="evidence" value="ECO:0000303"/>
    <property type="project" value="ComplexPortal"/>
</dbReference>
<dbReference type="FunFam" id="2.130.10.10:FF:000021">
    <property type="entry name" value="histone-binding protein RBBP4 isoform X1"/>
    <property type="match status" value="1"/>
</dbReference>
<dbReference type="Gene3D" id="2.130.10.10">
    <property type="entry name" value="YVTN repeat-like/Quinoprotein amine dehydrogenase"/>
    <property type="match status" value="1"/>
</dbReference>
<dbReference type="InterPro" id="IPR020472">
    <property type="entry name" value="G-protein_beta_WD-40_rep"/>
</dbReference>
<dbReference type="InterPro" id="IPR022052">
    <property type="entry name" value="Histone-bd_RBBP4-like_N"/>
</dbReference>
<dbReference type="InterPro" id="IPR015943">
    <property type="entry name" value="WD40/YVTN_repeat-like_dom_sf"/>
</dbReference>
<dbReference type="InterPro" id="IPR019775">
    <property type="entry name" value="WD40_repeat_CS"/>
</dbReference>
<dbReference type="InterPro" id="IPR036322">
    <property type="entry name" value="WD40_repeat_dom_sf"/>
</dbReference>
<dbReference type="InterPro" id="IPR001680">
    <property type="entry name" value="WD40_rpt"/>
</dbReference>
<dbReference type="InterPro" id="IPR050459">
    <property type="entry name" value="WD_repeat_RBAP46/RBAP48/MSI1"/>
</dbReference>
<dbReference type="PANTHER" id="PTHR22850">
    <property type="entry name" value="WD40 REPEAT FAMILY"/>
    <property type="match status" value="1"/>
</dbReference>
<dbReference type="Pfam" id="PF12265">
    <property type="entry name" value="CAF1C_H4-bd"/>
    <property type="match status" value="1"/>
</dbReference>
<dbReference type="Pfam" id="PF00400">
    <property type="entry name" value="WD40"/>
    <property type="match status" value="5"/>
</dbReference>
<dbReference type="PRINTS" id="PR00320">
    <property type="entry name" value="GPROTEINBRPT"/>
</dbReference>
<dbReference type="SMART" id="SM00320">
    <property type="entry name" value="WD40"/>
    <property type="match status" value="6"/>
</dbReference>
<dbReference type="SUPFAM" id="SSF50978">
    <property type="entry name" value="WD40 repeat-like"/>
    <property type="match status" value="1"/>
</dbReference>
<dbReference type="PROSITE" id="PS00678">
    <property type="entry name" value="WD_REPEATS_1"/>
    <property type="match status" value="3"/>
</dbReference>
<dbReference type="PROSITE" id="PS50082">
    <property type="entry name" value="WD_REPEATS_2"/>
    <property type="match status" value="5"/>
</dbReference>
<dbReference type="PROSITE" id="PS50294">
    <property type="entry name" value="WD_REPEATS_REGION"/>
    <property type="match status" value="1"/>
</dbReference>
<proteinExistence type="evidence at protein level"/>
<sequence length="425" mass="47656">MADKEAAFDDAVEERVINEEYKIWKKNTPFLYDLVMTHALEWPSLTAQWLPDVTRPEGKDFSIHRLVLGTHTSDEQNHLVIASVQLPNDDAQFDASHYDSEKGEFGGFGSVSGKIEIEIKINHEGEVNRARYMPQNPCIIATKTPSSDVLVFDYTKHPSKPDPSGECNPDLRLRGHQKEGYGLSWNPNLSGHLLSASDDHTICLWDISAVPKEGKVVDAKTIFTGHTAVVEDVSWHLLHESLFGSVADDQKLMIWDTRSNNTSKPSHSVDAHTAEVNCLSFNPYSEFILATGSADKTVALWDLRNLKLKLHSFESHKDEIFQVQWSPHNETILASSGTDRRLNVWDLSKIGEEQSPEDAEDGPPELLFIHGGHTAKISDFSWNPNEPWVICSVSEDNIMQVWQMAENIYNDEDPEGSVDPEGQGS</sequence>
<organism>
    <name type="scientific">Mus musculus</name>
    <name type="common">Mouse</name>
    <dbReference type="NCBI Taxonomy" id="10090"/>
    <lineage>
        <taxon>Eukaryota</taxon>
        <taxon>Metazoa</taxon>
        <taxon>Chordata</taxon>
        <taxon>Craniata</taxon>
        <taxon>Vertebrata</taxon>
        <taxon>Euteleostomi</taxon>
        <taxon>Mammalia</taxon>
        <taxon>Eutheria</taxon>
        <taxon>Euarchontoglires</taxon>
        <taxon>Glires</taxon>
        <taxon>Rodentia</taxon>
        <taxon>Myomorpha</taxon>
        <taxon>Muroidea</taxon>
        <taxon>Muridae</taxon>
        <taxon>Murinae</taxon>
        <taxon>Mus</taxon>
        <taxon>Mus</taxon>
    </lineage>
</organism>
<gene>
    <name type="primary">Rbbp4</name>
    <name type="synonym">Rbap48</name>
</gene>
<accession>Q60972</accession>
<accession>A2A875</accession>
<reference key="1">
    <citation type="journal article" date="1995" name="J. Biol. Chem.">
        <title>Dual retinoblastoma-binding proteins with properties related to a negative regulator of ras in yeast.</title>
        <authorList>
            <person name="Qian Y.-W."/>
            <person name="Lee E.Y.-H.P."/>
        </authorList>
    </citation>
    <scope>NUCLEOTIDE SEQUENCE [MRNA]</scope>
    <scope>TISSUE SPECIFICITY</scope>
</reference>
<reference key="2">
    <citation type="journal article" date="2009" name="PLoS Biol.">
        <title>Lineage-specific biology revealed by a finished genome assembly of the mouse.</title>
        <authorList>
            <person name="Church D.M."/>
            <person name="Goodstadt L."/>
            <person name="Hillier L.W."/>
            <person name="Zody M.C."/>
            <person name="Goldstein S."/>
            <person name="She X."/>
            <person name="Bult C.J."/>
            <person name="Agarwala R."/>
            <person name="Cherry J.L."/>
            <person name="DiCuccio M."/>
            <person name="Hlavina W."/>
            <person name="Kapustin Y."/>
            <person name="Meric P."/>
            <person name="Maglott D."/>
            <person name="Birtle Z."/>
            <person name="Marques A.C."/>
            <person name="Graves T."/>
            <person name="Zhou S."/>
            <person name="Teague B."/>
            <person name="Potamousis K."/>
            <person name="Churas C."/>
            <person name="Place M."/>
            <person name="Herschleb J."/>
            <person name="Runnheim R."/>
            <person name="Forrest D."/>
            <person name="Amos-Landgraf J."/>
            <person name="Schwartz D.C."/>
            <person name="Cheng Z."/>
            <person name="Lindblad-Toh K."/>
            <person name="Eichler E.E."/>
            <person name="Ponting C.P."/>
        </authorList>
    </citation>
    <scope>NUCLEOTIDE SEQUENCE [LARGE SCALE GENOMIC DNA]</scope>
    <source>
        <strain>C57BL/6J</strain>
    </source>
</reference>
<reference key="3">
    <citation type="submission" date="2005-09" db="EMBL/GenBank/DDBJ databases">
        <authorList>
            <person name="Mural R.J."/>
            <person name="Adams M.D."/>
            <person name="Myers E.W."/>
            <person name="Smith H.O."/>
            <person name="Venter J.C."/>
        </authorList>
    </citation>
    <scope>NUCLEOTIDE SEQUENCE [LARGE SCALE GENOMIC DNA]</scope>
</reference>
<reference key="4">
    <citation type="journal article" date="2004" name="Genome Res.">
        <title>The status, quality, and expansion of the NIH full-length cDNA project: the Mammalian Gene Collection (MGC).</title>
        <authorList>
            <consortium name="The MGC Project Team"/>
        </authorList>
    </citation>
    <scope>NUCLEOTIDE SEQUENCE [LARGE SCALE MRNA]</scope>
    <source>
        <tissue>Brain</tissue>
    </source>
</reference>
<reference key="5">
    <citation type="journal article" date="1998" name="Mol. Cell">
        <title>SAP30, a component of the mSin3 corepressor complex involved in N-CoR-mediated repression by specific transcription factors.</title>
        <authorList>
            <person name="Laherty C.D."/>
            <person name="Billin A.N."/>
            <person name="Lavinsky R.M."/>
            <person name="Yochum G.S."/>
            <person name="Bush A.C."/>
            <person name="Sun J.-M."/>
            <person name="Mullen T.-M."/>
            <person name="Davie J.R."/>
            <person name="Rose D.W."/>
            <person name="Glass C.K."/>
            <person name="Rosenfeld M.G."/>
            <person name="Ayer D.E."/>
            <person name="Eisenman R.N."/>
        </authorList>
    </citation>
    <scope>IDENTIFICATION IN A SIN3 HDAC COMPLEX</scope>
    <scope>INTERACTION WITH SAP30</scope>
</reference>
<reference key="6">
    <citation type="journal article" date="2000" name="Mol. Cell. Biol.">
        <title>Histone binding protein RbAp48 interacts with a complex of CREB binding protein and phosphorylated CREB.</title>
        <authorList>
            <person name="Zhang Q."/>
            <person name="Vo N."/>
            <person name="Goodman R.H."/>
        </authorList>
    </citation>
    <scope>INTERACTION WITH CREBBP</scope>
</reference>
<reference key="7">
    <citation type="journal article" date="2000" name="Proc. Natl. Acad. Sci. U.S.A.">
        <title>Identification of a nuclear domain with deacetylase activity.</title>
        <authorList>
            <person name="Downes M."/>
            <person name="Ordentlich P."/>
            <person name="Kao H.-Y."/>
            <person name="Alvarez J.G.A."/>
            <person name="Evans R.M."/>
        </authorList>
    </citation>
    <scope>INTERACTION WITH HDAC7</scope>
</reference>
<reference key="8">
    <citation type="journal article" date="2002" name="Nucleic Acids Res.">
        <title>Functional and physical interaction between the histone methyl transferase Suv39H1 and histone deacetylases.</title>
        <authorList>
            <person name="Vaute O."/>
            <person name="Nicolas E."/>
            <person name="Vandel L."/>
            <person name="Trouche D."/>
        </authorList>
    </citation>
    <scope>INTERACTION WITH SUV39H1</scope>
</reference>
<reference key="9">
    <citation type="journal article" date="2006" name="Mol. Cell. Proteomics">
        <title>Comprehensive identification of phosphorylation sites in postsynaptic density preparations.</title>
        <authorList>
            <person name="Trinidad J.C."/>
            <person name="Specht C.G."/>
            <person name="Thalhammer A."/>
            <person name="Schoepfer R."/>
            <person name="Burlingame A.L."/>
        </authorList>
    </citation>
    <scope>ACETYLATION [LARGE SCALE ANALYSIS] AT ALA-2</scope>
    <scope>CLEAVAGE OF INITIATOR METHIONINE [LARGE SCALE ANALYSIS]</scope>
    <scope>IDENTIFICATION BY MASS SPECTROMETRY [LARGE SCALE ANALYSIS]</scope>
    <source>
        <tissue>Brain</tissue>
    </source>
</reference>
<reference key="10">
    <citation type="journal article" date="2008" name="Mol. Cell">
        <title>EZH1 mediates methylation on histone H3 lysine 27 and complements EZH2 in maintaining stem cell identity and executing pluripotency.</title>
        <authorList>
            <person name="Shen X."/>
            <person name="Liu Y."/>
            <person name="Hsu Y.-J."/>
            <person name="Fujiwara Y."/>
            <person name="Kim J."/>
            <person name="Mao X."/>
            <person name="Yuan G.-C."/>
            <person name="Orkin S.H."/>
        </authorList>
    </citation>
    <scope>IDENTIFICATION IN THE PRC2/EZH1 COMPLEX</scope>
</reference>
<reference key="11">
    <citation type="journal article" date="2010" name="Cell">
        <title>A tissue-specific atlas of mouse protein phosphorylation and expression.</title>
        <authorList>
            <person name="Huttlin E.L."/>
            <person name="Jedrychowski M.P."/>
            <person name="Elias J.E."/>
            <person name="Goswami T."/>
            <person name="Rad R."/>
            <person name="Beausoleil S.A."/>
            <person name="Villen J."/>
            <person name="Haas W."/>
            <person name="Sowa M.E."/>
            <person name="Gygi S.P."/>
        </authorList>
    </citation>
    <scope>IDENTIFICATION BY MASS SPECTROMETRY [LARGE SCALE ANALYSIS]</scope>
    <source>
        <tissue>Brain</tissue>
        <tissue>Brown adipose tissue</tissue>
        <tissue>Heart</tissue>
        <tissue>Kidney</tissue>
        <tissue>Liver</tissue>
        <tissue>Lung</tissue>
        <tissue>Spleen</tissue>
        <tissue>Testis</tissue>
    </source>
</reference>
<reference key="12">
    <citation type="journal article" date="2013" name="Mol. Cell">
        <title>SIRT5-mediated lysine desuccinylation impacts diverse metabolic pathways.</title>
        <authorList>
            <person name="Park J."/>
            <person name="Chen Y."/>
            <person name="Tishkoff D.X."/>
            <person name="Peng C."/>
            <person name="Tan M."/>
            <person name="Dai L."/>
            <person name="Xie Z."/>
            <person name="Zhang Y."/>
            <person name="Zwaans B.M."/>
            <person name="Skinner M.E."/>
            <person name="Lombard D.B."/>
            <person name="Zhao Y."/>
        </authorList>
    </citation>
    <scope>ACETYLATION [LARGE SCALE ANALYSIS] AT LYS-160</scope>
    <scope>IDENTIFICATION BY MASS SPECTROMETRY [LARGE SCALE ANALYSIS]</scope>
    <source>
        <tissue>Embryonic fibroblast</tissue>
    </source>
</reference>
<reference key="13">
    <citation type="journal article" date="2017" name="EMBO J.">
        <title>Fam60a defines a variant Sin3a-Hdac complex in embryonic stem cells required for self-renewal.</title>
        <authorList>
            <person name="Streubel G."/>
            <person name="Fitzpatrick D.J."/>
            <person name="Oliviero G."/>
            <person name="Scelfo A."/>
            <person name="Moran B."/>
            <person name="Das S."/>
            <person name="Munawar N."/>
            <person name="Watson A."/>
            <person name="Wynne K."/>
            <person name="Negri G.L."/>
            <person name="Dillon E.T."/>
            <person name="Jammula S."/>
            <person name="Hokamp K."/>
            <person name="O'Connor D.P."/>
            <person name="Pasini D."/>
            <person name="Cagney G."/>
            <person name="Bracken A.P."/>
        </authorList>
    </citation>
    <scope>IDENTIFICATION IN A COMPLEX WITH SIN3A; SINHCAF; HDAC1; SAP30; OGT AND TET1</scope>
</reference>
<reference key="14">
    <citation type="journal article" date="2021" name="Adv. Sci.">
        <title>PWWP2B Fine-Tunes Adipose Thermogenesis by Stabilizing HDACs in a NuRD Subcomplex.</title>
        <authorList>
            <person name="Yan L."/>
            <person name="Jin W."/>
            <person name="Zhao Q."/>
            <person name="Cui X."/>
            <person name="Shi T."/>
            <person name="Xu Y."/>
            <person name="Li F."/>
            <person name="Jin W."/>
            <person name="Zhang Z."/>
            <person name="Zhang Z."/>
            <person name="Tang Q.Q."/>
            <person name="Pan D."/>
        </authorList>
    </citation>
    <scope>INTERACTION WITH PWWP2B</scope>
</reference>
<comment type="function">
    <text evidence="1">Core histone-binding subunit that may target chromatin assembly factors, chromatin remodeling factors and histone deacetylases to their histone substrates in a manner that is regulated by nucleosomal DNA (By similarity). Component of the chromatin assembly factor 1 (CAF-1) complex, which is required for chromatin assembly following DNA replication and DNA repair (By similarity). Component of the core histone deacetylase (HDAC) complex, which promotes histone deacetylation and consequent transcriptional repression (By similarity). Component of the nucleosome remodeling and histone deacetylase complex (the NuRD complex), which promotes transcriptional repression by histone deacetylation and nucleosome remodeling (By similarity). Component of the PRC2 complex, which promotes repression of homeotic genes during development (By similarity). Component of the NURF (nucleosome remodeling factor) complex (By similarity).</text>
</comment>
<comment type="subunit">
    <text evidence="1 2 3 4 5 6 7 10">Binds directly to helix 1 of the histone fold of histone H4, a region that is not accessible when H4 is in chromatin (By similarity). Subunit of the chromatin assembly factor 1 (CAF-1) complex, which is composed of RBBP4, CHAF1B and CHAF1A (By similarity). Subunit of the core histone deacetylase (HDAC) complex, which is composed of HDAC1, HDAC2, RBBP4 and RBBP7 (By similarity). The core HDAC complex associates with SIN3A, ARID4B/SAP180, SAP18, SAP30, SAP130, SUDS3/SAP45 and possibly ARID4A/RBP1 and ING1 to form the SIN3 HDAC complex (By similarity). Component of the nucleosome remodeling and deacetylase (NuRD) repressor complex, composed of core proteins MTA1, MTA2, MTA3, RBBP4, RBBP7, HDAC1, HDAC2, MBD2, MBD3, and peripherally associated proteins CDK2AP1, CDK2AP2, GATAD2A, GATAD2B, CHD3, CHD4 and CHD5 (By similarity). The exact stoichiometry of the NuRD complex is unknown, and some subunits such as MBD2 and MBD3, GATAD2A and GATAD2B, and CHD3, CHD4 and CHD5 define mutually exclusive NuRD complexes (By similarity). Interacts with ZNF512B; the interaction is direct and may play a role in repressing gene expression (By similarity). The NuRD complex may also interact with MBD3L1 and MBD3L2 (By similarity). Component of the PRC2 complex, which consists of the core subunits EED, EZH1 or EZH2, SUZ12, and RBBP4, and various combinations of accessory subunits including AEBP2, JARID2, PHF19, MTF2 and EPOP (PubMed:19026780). Forms a monomeric PRC2.2 (class 2) complex consisting of at least SUZ12, RBBP4, AEBP2 and JARID2 (By similarity). Forms a dimeric PRC2.1 (class 1, PRC-PCL) complex consisting of at least SUZ12, RBBP4, and PHF19; PHF19 stabilizes the dimeric structure which enhances PRC2 interaction with chromatin (By similarity). Component of the NURF-1 ISWI chromatin remodeling complex (also called the nucleosome-remodeling factor (NURF) complex) at least composed of SMARCA1 (isoform 2), BPTF, RBBP4 and RBBP7 (PubMed:10866654). Within the complex interacts with isoform 2 of SMARCA1 (By similarity). Component of the BPFT-SMARCA1 complex at least composed of SMARCA1 (isoform 1), BPFT, RBBP4 and RBBP7; the complex is catalytically inactive and does not remodel chromatin (By similarity). Within the complex interacts with isoform 1 of SMARCA1 (By similarity). Interacts with the ISWI chromatin remodeling complex component SMARCA5; the interaction is direct (By similarity). Interacts with the viral protein-binding domain of the retinoblastoma protein (RB1) (By similarity). Component of the DREAM complex (also named LINC complex) at least composed of E2F4, E2F5, LIN9, LIN37, LIN52, LIN54, MYBL1, MYBL2, RBL1, RBL2, RBBP4, TFDP1 and TFDP2 (By similarity). The complex exists in quiescent cells where it represses cell cycle-dependent genes (By similarity). It dissociates in S phase when LIN9, LIN37, LIN52 and LIN54 form a subcomplex that binds to MYBL2 (By similarity). Found in a complex composed of at least SINHCAF, SIN3A, HDAC1, SAP30, RBBP4, OGT and TET1 (PubMed:28554894). Interacts with ZNF827; the interaction is direct and recruits RBBP4 to telomeres (By similarity). Interacts with MTA1; the interaction is direct and mutually exclusive with binding histone H4 (By similarity). Interacts with ARMC12 (via ARM domains) (By similarity). Interacts with BRCA1 (By similarity). Interacts with CDK2AP1 (By similarity). Interacts with CREBBP, and this interaction may be enhanced by the binding of phosphorylated CREB1 to CREBBP (PubMed:10866654). Interacts with ERCC6 (By similarity). Interacts with HDAC7 (PubMed:10984530). Interacts with PHF6 (By similarity). Interacts with PWWP2B (PubMed:34180153). Interacts with SPEN/MINT (By similarity). Interacts with SUV39H1 (PubMed:11788710).</text>
</comment>
<comment type="subcellular location">
    <subcellularLocation>
        <location evidence="1">Nucleus</location>
    </subcellularLocation>
    <subcellularLocation>
        <location evidence="1">Chromosome</location>
        <location evidence="1">Telomere</location>
    </subcellularLocation>
    <text evidence="1">Localizes to chromatin as part of the PRC2 complex.</text>
</comment>
<comment type="tissue specificity">
    <text evidence="8">Higher levels in brain, thymus, lung, spleen, kidney, testis, and ovary/uterus; lower levels in heart, liver, and muscle.</text>
</comment>
<comment type="similarity">
    <text evidence="9">Belongs to the WD repeat RBAP46/RBAP48/MSI1 family.</text>
</comment>
<comment type="sequence caution" evidence="9">
    <conflict type="frameshift">
        <sequence resource="EMBL-CDS" id="AAC52275"/>
    </conflict>
</comment>
<feature type="initiator methionine" description="Removed" evidence="11">
    <location>
        <position position="1"/>
    </location>
</feature>
<feature type="chain" id="PRO_0000051187" description="Histone-binding protein RBBP4">
    <location>
        <begin position="2"/>
        <end position="425"/>
    </location>
</feature>
<feature type="repeat" description="WD 1" evidence="1">
    <location>
        <begin position="32"/>
        <end position="125"/>
    </location>
</feature>
<feature type="repeat" description="WD 2" evidence="1">
    <location>
        <begin position="126"/>
        <end position="175"/>
    </location>
</feature>
<feature type="repeat" description="WD 3" evidence="1">
    <location>
        <begin position="176"/>
        <end position="223"/>
    </location>
</feature>
<feature type="repeat" description="WD 4" evidence="1">
    <location>
        <begin position="225"/>
        <end position="270"/>
    </location>
</feature>
<feature type="repeat" description="WD 5" evidence="1">
    <location>
        <begin position="271"/>
        <end position="314"/>
    </location>
</feature>
<feature type="repeat" description="WD 6" evidence="1">
    <location>
        <begin position="315"/>
        <end position="371"/>
    </location>
</feature>
<feature type="repeat" description="WD 7" evidence="1">
    <location>
        <begin position="372"/>
        <end position="404"/>
    </location>
</feature>
<feature type="region of interest" description="Interaction with ARMC12" evidence="1">
    <location>
        <begin position="2"/>
        <end position="132"/>
    </location>
</feature>
<feature type="modified residue" description="N-acetylalanine" evidence="11">
    <location>
        <position position="2"/>
    </location>
</feature>
<feature type="modified residue" description="N6-acetyllysine; alternate" evidence="1">
    <location>
        <position position="4"/>
    </location>
</feature>
<feature type="modified residue" description="Phosphoserine" evidence="1">
    <location>
        <position position="110"/>
    </location>
</feature>
<feature type="modified residue" description="N6-acetyllysine; alternate" evidence="12">
    <location>
        <position position="160"/>
    </location>
</feature>
<feature type="modified residue" description="Phosphoserine" evidence="1">
    <location>
        <position position="355"/>
    </location>
</feature>
<feature type="cross-link" description="Glycyl lysine isopeptide (Lys-Gly) (interchain with G-Cter in SUMO2); alternate" evidence="1">
    <location>
        <position position="4"/>
    </location>
</feature>
<feature type="cross-link" description="Glycyl lysine isopeptide (Lys-Gly) (interchain with G-Cter in ubiquitin); alternate" evidence="1">
    <location>
        <position position="4"/>
    </location>
</feature>
<feature type="cross-link" description="Glycyl lysine isopeptide (Lys-Gly) (interchain with G-Cter in SUMO2); alternate" evidence="1">
    <location>
        <position position="160"/>
    </location>
</feature>
<feature type="sequence conflict" description="In Ref. 1; AAC52275." evidence="9" ref="1">
    <original>E</original>
    <variation>K</variation>
    <location>
        <position position="213"/>
    </location>
</feature>
<name>RBBP4_MOUSE</name>
<protein>
    <recommendedName>
        <fullName>Histone-binding protein RBBP4</fullName>
    </recommendedName>
    <alternativeName>
        <fullName>Chromatin assembly factor 1 subunit C</fullName>
        <shortName>CAF-1 subunit C</shortName>
    </alternativeName>
    <alternativeName>
        <fullName>Chromatin assembly factor I p48 subunit</fullName>
        <shortName>CAF-I 48 kDa subunit</shortName>
        <shortName>CAF-I p48</shortName>
    </alternativeName>
    <alternativeName>
        <fullName>Nucleosome-remodeling factor subunit RBAP48</fullName>
    </alternativeName>
    <alternativeName>
        <fullName evidence="1">Retinoblastoma-binding protein 4</fullName>
        <shortName>RBBP-4</shortName>
    </alternativeName>
    <alternativeName>
        <fullName>Retinoblastoma-binding protein p48</fullName>
    </alternativeName>
</protein>
<keyword id="KW-0007">Acetylation</keyword>
<keyword id="KW-0131">Cell cycle</keyword>
<keyword id="KW-0143">Chaperone</keyword>
<keyword id="KW-0156">Chromatin regulator</keyword>
<keyword id="KW-0158">Chromosome</keyword>
<keyword id="KW-0227">DNA damage</keyword>
<keyword id="KW-0234">DNA repair</keyword>
<keyword id="KW-0235">DNA replication</keyword>
<keyword id="KW-1017">Isopeptide bond</keyword>
<keyword id="KW-0539">Nucleus</keyword>
<keyword id="KW-0597">Phosphoprotein</keyword>
<keyword id="KW-1185">Reference proteome</keyword>
<keyword id="KW-0677">Repeat</keyword>
<keyword id="KW-0678">Repressor</keyword>
<keyword id="KW-0779">Telomere</keyword>
<keyword id="KW-0804">Transcription</keyword>
<keyword id="KW-0805">Transcription regulation</keyword>
<keyword id="KW-0832">Ubl conjugation</keyword>
<keyword id="KW-0853">WD repeat</keyword>